<feature type="chain" id="PRO_0000163627" description="1-deoxy-D-xylulose 5-phosphate reductoisomerase">
    <location>
        <begin position="1"/>
        <end position="356"/>
    </location>
</feature>
<feature type="binding site" evidence="1">
    <location>
        <position position="7"/>
    </location>
    <ligand>
        <name>NADPH</name>
        <dbReference type="ChEBI" id="CHEBI:57783"/>
    </ligand>
</feature>
<feature type="binding site" evidence="1">
    <location>
        <position position="8"/>
    </location>
    <ligand>
        <name>NADPH</name>
        <dbReference type="ChEBI" id="CHEBI:57783"/>
    </ligand>
</feature>
<feature type="binding site" evidence="1">
    <location>
        <position position="9"/>
    </location>
    <ligand>
        <name>NADPH</name>
        <dbReference type="ChEBI" id="CHEBI:57783"/>
    </ligand>
</feature>
<feature type="binding site" evidence="1">
    <location>
        <position position="10"/>
    </location>
    <ligand>
        <name>NADPH</name>
        <dbReference type="ChEBI" id="CHEBI:57783"/>
    </ligand>
</feature>
<feature type="binding site" evidence="1">
    <location>
        <position position="31"/>
    </location>
    <ligand>
        <name>NADPH</name>
        <dbReference type="ChEBI" id="CHEBI:57783"/>
    </ligand>
</feature>
<feature type="binding site" evidence="1">
    <location>
        <position position="33"/>
    </location>
    <ligand>
        <name>NADPH</name>
        <dbReference type="ChEBI" id="CHEBI:57783"/>
    </ligand>
</feature>
<feature type="binding site" evidence="1">
    <location>
        <position position="111"/>
    </location>
    <ligand>
        <name>NADPH</name>
        <dbReference type="ChEBI" id="CHEBI:57783"/>
    </ligand>
</feature>
<feature type="binding site" evidence="1">
    <location>
        <position position="112"/>
    </location>
    <ligand>
        <name>1-deoxy-D-xylulose 5-phosphate</name>
        <dbReference type="ChEBI" id="CHEBI:57792"/>
    </ligand>
</feature>
<feature type="binding site" evidence="1">
    <location>
        <position position="113"/>
    </location>
    <ligand>
        <name>NADPH</name>
        <dbReference type="ChEBI" id="CHEBI:57783"/>
    </ligand>
</feature>
<feature type="binding site" evidence="1">
    <location>
        <position position="131"/>
    </location>
    <ligand>
        <name>Mn(2+)</name>
        <dbReference type="ChEBI" id="CHEBI:29035"/>
    </ligand>
</feature>
<feature type="binding site" evidence="1">
    <location>
        <position position="132"/>
    </location>
    <ligand>
        <name>1-deoxy-D-xylulose 5-phosphate</name>
        <dbReference type="ChEBI" id="CHEBI:57792"/>
    </ligand>
</feature>
<feature type="binding site" evidence="1">
    <location>
        <position position="133"/>
    </location>
    <ligand>
        <name>1-deoxy-D-xylulose 5-phosphate</name>
        <dbReference type="ChEBI" id="CHEBI:57792"/>
    </ligand>
</feature>
<feature type="binding site" evidence="1">
    <location>
        <position position="133"/>
    </location>
    <ligand>
        <name>Mn(2+)</name>
        <dbReference type="ChEBI" id="CHEBI:29035"/>
    </ligand>
</feature>
<feature type="binding site" evidence="1">
    <location>
        <position position="155"/>
    </location>
    <ligand>
        <name>1-deoxy-D-xylulose 5-phosphate</name>
        <dbReference type="ChEBI" id="CHEBI:57792"/>
    </ligand>
</feature>
<feature type="binding site" evidence="1">
    <location>
        <position position="178"/>
    </location>
    <ligand>
        <name>1-deoxy-D-xylulose 5-phosphate</name>
        <dbReference type="ChEBI" id="CHEBI:57792"/>
    </ligand>
</feature>
<feature type="binding site" evidence="1">
    <location>
        <position position="184"/>
    </location>
    <ligand>
        <name>NADPH</name>
        <dbReference type="ChEBI" id="CHEBI:57783"/>
    </ligand>
</feature>
<feature type="binding site" evidence="1">
    <location>
        <position position="191"/>
    </location>
    <ligand>
        <name>1-deoxy-D-xylulose 5-phosphate</name>
        <dbReference type="ChEBI" id="CHEBI:57792"/>
    </ligand>
</feature>
<feature type="binding site" evidence="1">
    <location>
        <position position="196"/>
    </location>
    <ligand>
        <name>1-deoxy-D-xylulose 5-phosphate</name>
        <dbReference type="ChEBI" id="CHEBI:57792"/>
    </ligand>
</feature>
<feature type="binding site" evidence="1">
    <location>
        <position position="197"/>
    </location>
    <ligand>
        <name>1-deoxy-D-xylulose 5-phosphate</name>
        <dbReference type="ChEBI" id="CHEBI:57792"/>
    </ligand>
</feature>
<feature type="binding site" evidence="1">
    <location>
        <position position="200"/>
    </location>
    <ligand>
        <name>1-deoxy-D-xylulose 5-phosphate</name>
        <dbReference type="ChEBI" id="CHEBI:57792"/>
    </ligand>
</feature>
<feature type="binding site" evidence="1">
    <location>
        <position position="200"/>
    </location>
    <ligand>
        <name>Mn(2+)</name>
        <dbReference type="ChEBI" id="CHEBI:29035"/>
    </ligand>
</feature>
<sequence>MILFGSTGSIGVNALKLAALKNIPISALACGDNIALLNEQIARFKPKFVAIKDSKNKHLVKHDRVFIGQEGLEQILTECQDKLLLNAIVGFAGLKSTLKAKELGKNIALANKESLVVAGSFLKGAKFLPVDSEHAALKFLLEGKKNIAKLYITASGGAFYKYKIKDLNQVSLKDALKHPNWNMGAKITIDSATMANKLFEIIEAYHLYDFKEIDALIEPRSLVHAMCEFKNGASTAYFSKADMKLAISDAIFEKQDTPILEAVDFSKMPALKFHPISTKKYPIFKLKNTFLKEPNLGVIINAANEVGVYNFLENKSGFLDIAKCIFKALDHFGVPKISSIEEVFEYDFKTREYLRS</sequence>
<comment type="function">
    <text evidence="1">Catalyzes the NADPH-dependent rearrangement and reduction of 1-deoxy-D-xylulose-5-phosphate (DXP) to 2-C-methyl-D-erythritol 4-phosphate (MEP).</text>
</comment>
<comment type="catalytic activity">
    <reaction evidence="1">
        <text>2-C-methyl-D-erythritol 4-phosphate + NADP(+) = 1-deoxy-D-xylulose 5-phosphate + NADPH + H(+)</text>
        <dbReference type="Rhea" id="RHEA:13717"/>
        <dbReference type="ChEBI" id="CHEBI:15378"/>
        <dbReference type="ChEBI" id="CHEBI:57783"/>
        <dbReference type="ChEBI" id="CHEBI:57792"/>
        <dbReference type="ChEBI" id="CHEBI:58262"/>
        <dbReference type="ChEBI" id="CHEBI:58349"/>
        <dbReference type="EC" id="1.1.1.267"/>
    </reaction>
    <physiologicalReaction direction="right-to-left" evidence="1">
        <dbReference type="Rhea" id="RHEA:13719"/>
    </physiologicalReaction>
</comment>
<comment type="cofactor">
    <cofactor evidence="1">
        <name>Mg(2+)</name>
        <dbReference type="ChEBI" id="CHEBI:18420"/>
    </cofactor>
    <cofactor evidence="1">
        <name>Mn(2+)</name>
        <dbReference type="ChEBI" id="CHEBI:29035"/>
    </cofactor>
</comment>
<comment type="pathway">
    <text evidence="1">Isoprenoid biosynthesis; isopentenyl diphosphate biosynthesis via DXP pathway; isopentenyl diphosphate from 1-deoxy-D-xylulose 5-phosphate: step 1/6.</text>
</comment>
<comment type="similarity">
    <text evidence="1">Belongs to the DXR family.</text>
</comment>
<evidence type="ECO:0000255" key="1">
    <source>
        <dbReference type="HAMAP-Rule" id="MF_00183"/>
    </source>
</evidence>
<keyword id="KW-0414">Isoprene biosynthesis</keyword>
<keyword id="KW-0464">Manganese</keyword>
<keyword id="KW-0479">Metal-binding</keyword>
<keyword id="KW-0521">NADP</keyword>
<keyword id="KW-0560">Oxidoreductase</keyword>
<protein>
    <recommendedName>
        <fullName evidence="1">1-deoxy-D-xylulose 5-phosphate reductoisomerase</fullName>
        <shortName evidence="1">DXP reductoisomerase</shortName>
        <ecNumber evidence="1">1.1.1.267</ecNumber>
    </recommendedName>
    <alternativeName>
        <fullName evidence="1">1-deoxyxylulose-5-phosphate reductoisomerase</fullName>
    </alternativeName>
    <alternativeName>
        <fullName evidence="1">2-C-methyl-D-erythritol 4-phosphate synthase</fullName>
    </alternativeName>
</protein>
<gene>
    <name evidence="1" type="primary">dxr</name>
    <name type="ordered locus">CJE1535</name>
</gene>
<reference key="1">
    <citation type="journal article" date="2005" name="PLoS Biol.">
        <title>Major structural differences and novel potential virulence mechanisms from the genomes of multiple Campylobacter species.</title>
        <authorList>
            <person name="Fouts D.E."/>
            <person name="Mongodin E.F."/>
            <person name="Mandrell R.E."/>
            <person name="Miller W.G."/>
            <person name="Rasko D.A."/>
            <person name="Ravel J."/>
            <person name="Brinkac L.M."/>
            <person name="DeBoy R.T."/>
            <person name="Parker C.T."/>
            <person name="Daugherty S.C."/>
            <person name="Dodson R.J."/>
            <person name="Durkin A.S."/>
            <person name="Madupu R."/>
            <person name="Sullivan S.A."/>
            <person name="Shetty J.U."/>
            <person name="Ayodeji M.A."/>
            <person name="Shvartsbeyn A."/>
            <person name="Schatz M.C."/>
            <person name="Badger J.H."/>
            <person name="Fraser C.M."/>
            <person name="Nelson K.E."/>
        </authorList>
    </citation>
    <scope>NUCLEOTIDE SEQUENCE [LARGE SCALE GENOMIC DNA]</scope>
    <source>
        <strain>RM1221</strain>
    </source>
</reference>
<name>DXR_CAMJR</name>
<accession>Q5HT65</accession>
<proteinExistence type="inferred from homology"/>
<dbReference type="EC" id="1.1.1.267" evidence="1"/>
<dbReference type="EMBL" id="CP000025">
    <property type="protein sequence ID" value="AAW35972.1"/>
    <property type="molecule type" value="Genomic_DNA"/>
</dbReference>
<dbReference type="RefSeq" id="WP_002867315.1">
    <property type="nucleotide sequence ID" value="NC_003912.7"/>
</dbReference>
<dbReference type="SMR" id="Q5HT65"/>
<dbReference type="KEGG" id="cjr:CJE1535"/>
<dbReference type="HOGENOM" id="CLU_035714_4_0_7"/>
<dbReference type="UniPathway" id="UPA00056">
    <property type="reaction ID" value="UER00092"/>
</dbReference>
<dbReference type="GO" id="GO:0030604">
    <property type="term" value="F:1-deoxy-D-xylulose-5-phosphate reductoisomerase activity"/>
    <property type="evidence" value="ECO:0007669"/>
    <property type="project" value="UniProtKB-UniRule"/>
</dbReference>
<dbReference type="GO" id="GO:0030145">
    <property type="term" value="F:manganese ion binding"/>
    <property type="evidence" value="ECO:0007669"/>
    <property type="project" value="TreeGrafter"/>
</dbReference>
<dbReference type="GO" id="GO:0070402">
    <property type="term" value="F:NADPH binding"/>
    <property type="evidence" value="ECO:0007669"/>
    <property type="project" value="InterPro"/>
</dbReference>
<dbReference type="GO" id="GO:0051484">
    <property type="term" value="P:isopentenyl diphosphate biosynthetic process, methylerythritol 4-phosphate pathway involved in terpenoid biosynthetic process"/>
    <property type="evidence" value="ECO:0007669"/>
    <property type="project" value="TreeGrafter"/>
</dbReference>
<dbReference type="Gene3D" id="1.10.1740.10">
    <property type="match status" value="1"/>
</dbReference>
<dbReference type="Gene3D" id="3.40.50.720">
    <property type="entry name" value="NAD(P)-binding Rossmann-like Domain"/>
    <property type="match status" value="1"/>
</dbReference>
<dbReference type="HAMAP" id="MF_00183">
    <property type="entry name" value="DXP_reductoisom"/>
    <property type="match status" value="1"/>
</dbReference>
<dbReference type="InterPro" id="IPR003821">
    <property type="entry name" value="DXP_reductoisomerase"/>
</dbReference>
<dbReference type="InterPro" id="IPR013644">
    <property type="entry name" value="DXP_reductoisomerase_C"/>
</dbReference>
<dbReference type="InterPro" id="IPR013512">
    <property type="entry name" value="DXP_reductoisomerase_N"/>
</dbReference>
<dbReference type="InterPro" id="IPR026877">
    <property type="entry name" value="DXPR_C"/>
</dbReference>
<dbReference type="InterPro" id="IPR036169">
    <property type="entry name" value="DXPR_C_sf"/>
</dbReference>
<dbReference type="InterPro" id="IPR036291">
    <property type="entry name" value="NAD(P)-bd_dom_sf"/>
</dbReference>
<dbReference type="NCBIfam" id="TIGR00243">
    <property type="entry name" value="Dxr"/>
    <property type="match status" value="1"/>
</dbReference>
<dbReference type="PANTHER" id="PTHR30525">
    <property type="entry name" value="1-DEOXY-D-XYLULOSE 5-PHOSPHATE REDUCTOISOMERASE"/>
    <property type="match status" value="1"/>
</dbReference>
<dbReference type="PANTHER" id="PTHR30525:SF0">
    <property type="entry name" value="1-DEOXY-D-XYLULOSE 5-PHOSPHATE REDUCTOISOMERASE, CHLOROPLASTIC"/>
    <property type="match status" value="1"/>
</dbReference>
<dbReference type="Pfam" id="PF08436">
    <property type="entry name" value="DXP_redisom_C"/>
    <property type="match status" value="1"/>
</dbReference>
<dbReference type="Pfam" id="PF02670">
    <property type="entry name" value="DXP_reductoisom"/>
    <property type="match status" value="1"/>
</dbReference>
<dbReference type="Pfam" id="PF13288">
    <property type="entry name" value="DXPR_C"/>
    <property type="match status" value="1"/>
</dbReference>
<dbReference type="PIRSF" id="PIRSF006205">
    <property type="entry name" value="Dxp_reductismrs"/>
    <property type="match status" value="1"/>
</dbReference>
<dbReference type="SUPFAM" id="SSF69055">
    <property type="entry name" value="1-deoxy-D-xylulose-5-phosphate reductoisomerase, C-terminal domain"/>
    <property type="match status" value="1"/>
</dbReference>
<dbReference type="SUPFAM" id="SSF55347">
    <property type="entry name" value="Glyceraldehyde-3-phosphate dehydrogenase-like, C-terminal domain"/>
    <property type="match status" value="1"/>
</dbReference>
<dbReference type="SUPFAM" id="SSF51735">
    <property type="entry name" value="NAD(P)-binding Rossmann-fold domains"/>
    <property type="match status" value="1"/>
</dbReference>
<organism>
    <name type="scientific">Campylobacter jejuni (strain RM1221)</name>
    <dbReference type="NCBI Taxonomy" id="195099"/>
    <lineage>
        <taxon>Bacteria</taxon>
        <taxon>Pseudomonadati</taxon>
        <taxon>Campylobacterota</taxon>
        <taxon>Epsilonproteobacteria</taxon>
        <taxon>Campylobacterales</taxon>
        <taxon>Campylobacteraceae</taxon>
        <taxon>Campylobacter</taxon>
    </lineage>
</organism>